<organism>
    <name type="scientific">Vibrio vulnificus (strain CMCP6)</name>
    <dbReference type="NCBI Taxonomy" id="216895"/>
    <lineage>
        <taxon>Bacteria</taxon>
        <taxon>Pseudomonadati</taxon>
        <taxon>Pseudomonadota</taxon>
        <taxon>Gammaproteobacteria</taxon>
        <taxon>Vibrionales</taxon>
        <taxon>Vibrionaceae</taxon>
        <taxon>Vibrio</taxon>
    </lineage>
</organism>
<reference key="1">
    <citation type="submission" date="2002-12" db="EMBL/GenBank/DDBJ databases">
        <title>Complete genome sequence of Vibrio vulnificus CMCP6.</title>
        <authorList>
            <person name="Rhee J.H."/>
            <person name="Kim S.Y."/>
            <person name="Chung S.S."/>
            <person name="Kim J.J."/>
            <person name="Moon Y.H."/>
            <person name="Jeong H."/>
            <person name="Choy H.E."/>
        </authorList>
    </citation>
    <scope>NUCLEOTIDE SEQUENCE [LARGE SCALE GENOMIC DNA]</scope>
    <source>
        <strain>CMCP6</strain>
    </source>
</reference>
<accession>Q8DAH1</accession>
<keyword id="KW-0285">Flavoprotein</keyword>
<keyword id="KW-0288">FMN</keyword>
<keyword id="KW-0521">NADP</keyword>
<keyword id="KW-0560">Oxidoreductase</keyword>
<keyword id="KW-0694">RNA-binding</keyword>
<keyword id="KW-0819">tRNA processing</keyword>
<keyword id="KW-0820">tRNA-binding</keyword>
<proteinExistence type="inferred from homology"/>
<name>DUSC_VIBVU</name>
<feature type="chain" id="PRO_0000162128" description="tRNA-dihydrouridine(16) synthase">
    <location>
        <begin position="1"/>
        <end position="318"/>
    </location>
</feature>
<feature type="active site" description="Proton donor" evidence="1">
    <location>
        <position position="98"/>
    </location>
</feature>
<feature type="binding site" evidence="1">
    <location>
        <begin position="7"/>
        <end position="9"/>
    </location>
    <ligand>
        <name>FMN</name>
        <dbReference type="ChEBI" id="CHEBI:58210"/>
    </ligand>
</feature>
<feature type="binding site" evidence="1">
    <location>
        <position position="68"/>
    </location>
    <ligand>
        <name>FMN</name>
        <dbReference type="ChEBI" id="CHEBI:58210"/>
    </ligand>
</feature>
<feature type="binding site" evidence="1">
    <location>
        <position position="139"/>
    </location>
    <ligand>
        <name>FMN</name>
        <dbReference type="ChEBI" id="CHEBI:58210"/>
    </ligand>
</feature>
<feature type="binding site" evidence="1">
    <location>
        <begin position="200"/>
        <end position="202"/>
    </location>
    <ligand>
        <name>FMN</name>
        <dbReference type="ChEBI" id="CHEBI:58210"/>
    </ligand>
</feature>
<feature type="binding site" evidence="1">
    <location>
        <begin position="224"/>
        <end position="225"/>
    </location>
    <ligand>
        <name>FMN</name>
        <dbReference type="ChEBI" id="CHEBI:58210"/>
    </ligand>
</feature>
<feature type="site" description="Interacts with tRNA; defines subfamily-specific binding signature" evidence="1">
    <location>
        <position position="35"/>
    </location>
</feature>
<feature type="site" description="Interacts with tRNA" evidence="1">
    <location>
        <position position="95"/>
    </location>
</feature>
<feature type="site" description="Interacts with tRNA" evidence="1">
    <location>
        <position position="176"/>
    </location>
</feature>
<feature type="site" description="Interacts with tRNA; defines subfamily-specific binding signature" evidence="1">
    <location>
        <position position="272"/>
    </location>
</feature>
<feature type="site" description="Interacts with tRNA; defines subfamily-specific binding signature" evidence="1">
    <location>
        <position position="274"/>
    </location>
</feature>
<feature type="site" description="Interacts with tRNA" evidence="1">
    <location>
        <position position="279"/>
    </location>
</feature>
<feature type="site" description="Interacts with tRNA; defines subfamily-specific binding signature" evidence="1">
    <location>
        <position position="295"/>
    </location>
</feature>
<gene>
    <name evidence="1" type="primary">dusC</name>
    <name type="ordered locus">VV1_2229</name>
</gene>
<evidence type="ECO:0000255" key="1">
    <source>
        <dbReference type="HAMAP-Rule" id="MF_02043"/>
    </source>
</evidence>
<protein>
    <recommendedName>
        <fullName evidence="1">tRNA-dihydrouridine(16) synthase</fullName>
        <ecNumber evidence="1">1.3.1.-</ecNumber>
    </recommendedName>
    <alternativeName>
        <fullName evidence="1">U16-specific dihydrouridine synthase</fullName>
        <shortName evidence="1">U16-specific Dus</shortName>
    </alternativeName>
    <alternativeName>
        <fullName evidence="1">tRNA-dihydrouridine synthase C</fullName>
    </alternativeName>
</protein>
<sequence length="318" mass="36136">MRVILGPMEGVLDHLMREMLTEINDYDFCVTEFVRVVSQPLPDHVFYRLCPELKQGSKTKNGVPVKVQLLGQDPHWMAENAIRAAQLGAHGIDLNFGCPAKMVNQSKGGAALLQHPELIYQVVKACRDAVPSHIPVSAKIRLGWENPEDCFEIVDAVEQGKADELTVHARTKAGGYKASEIKWDYIDQIRQRSTIPLIANGEIWNYADGQACIETTGIDSLMVCRGALNVPNLGNIVKHNHRAMPWHEVVDLLLKYTQYEVRGDKGKYYPNRIKQWFAYLRQAYPQAADLFRDIRTLTQVESIVEHLHHYREQLEVAQ</sequence>
<dbReference type="EC" id="1.3.1.-" evidence="1"/>
<dbReference type="EMBL" id="AE016795">
    <property type="protein sequence ID" value="AAO10609.2"/>
    <property type="molecule type" value="Genomic_DNA"/>
</dbReference>
<dbReference type="RefSeq" id="WP_011080101.1">
    <property type="nucleotide sequence ID" value="NC_004459.3"/>
</dbReference>
<dbReference type="SMR" id="Q8DAH1"/>
<dbReference type="KEGG" id="vvu:VV1_2229"/>
<dbReference type="HOGENOM" id="CLU_013299_0_4_6"/>
<dbReference type="Proteomes" id="UP000002275">
    <property type="component" value="Chromosome 1"/>
</dbReference>
<dbReference type="GO" id="GO:0050660">
    <property type="term" value="F:flavin adenine dinucleotide binding"/>
    <property type="evidence" value="ECO:0007669"/>
    <property type="project" value="InterPro"/>
</dbReference>
<dbReference type="GO" id="GO:0010181">
    <property type="term" value="F:FMN binding"/>
    <property type="evidence" value="ECO:0007669"/>
    <property type="project" value="UniProtKB-UniRule"/>
</dbReference>
<dbReference type="GO" id="GO:0000049">
    <property type="term" value="F:tRNA binding"/>
    <property type="evidence" value="ECO:0007669"/>
    <property type="project" value="UniProtKB-UniRule"/>
</dbReference>
<dbReference type="GO" id="GO:0102262">
    <property type="term" value="F:tRNA-dihydrouridine16 synthase activity"/>
    <property type="evidence" value="ECO:0007669"/>
    <property type="project" value="RHEA"/>
</dbReference>
<dbReference type="CDD" id="cd02801">
    <property type="entry name" value="DUS_like_FMN"/>
    <property type="match status" value="1"/>
</dbReference>
<dbReference type="Gene3D" id="3.20.20.70">
    <property type="entry name" value="Aldolase class I"/>
    <property type="match status" value="1"/>
</dbReference>
<dbReference type="Gene3D" id="1.20.225.30">
    <property type="entry name" value="Dihydrouridine synthase, C-terminal recognition domain"/>
    <property type="match status" value="1"/>
</dbReference>
<dbReference type="HAMAP" id="MF_02043">
    <property type="entry name" value="DusC_subfam"/>
    <property type="match status" value="1"/>
</dbReference>
<dbReference type="InterPro" id="IPR013785">
    <property type="entry name" value="Aldolase_TIM"/>
</dbReference>
<dbReference type="InterPro" id="IPR035587">
    <property type="entry name" value="DUS-like_FMN-bd"/>
</dbReference>
<dbReference type="InterPro" id="IPR001269">
    <property type="entry name" value="DUS_fam"/>
</dbReference>
<dbReference type="InterPro" id="IPR032886">
    <property type="entry name" value="DusC"/>
</dbReference>
<dbReference type="InterPro" id="IPR042270">
    <property type="entry name" value="DusC_C"/>
</dbReference>
<dbReference type="InterPro" id="IPR018517">
    <property type="entry name" value="tRNA_hU_synthase_CS"/>
</dbReference>
<dbReference type="NCBIfam" id="NF007838">
    <property type="entry name" value="PRK10550.1"/>
    <property type="match status" value="1"/>
</dbReference>
<dbReference type="PANTHER" id="PTHR11082">
    <property type="entry name" value="TRNA-DIHYDROURIDINE SYNTHASE"/>
    <property type="match status" value="1"/>
</dbReference>
<dbReference type="PANTHER" id="PTHR11082:SF26">
    <property type="entry name" value="TRNA-DIHYDROURIDINE(16) SYNTHASE"/>
    <property type="match status" value="1"/>
</dbReference>
<dbReference type="Pfam" id="PF01207">
    <property type="entry name" value="Dus"/>
    <property type="match status" value="1"/>
</dbReference>
<dbReference type="PIRSF" id="PIRSF006621">
    <property type="entry name" value="Dus"/>
    <property type="match status" value="1"/>
</dbReference>
<dbReference type="SUPFAM" id="SSF51395">
    <property type="entry name" value="FMN-linked oxidoreductases"/>
    <property type="match status" value="1"/>
</dbReference>
<dbReference type="PROSITE" id="PS01136">
    <property type="entry name" value="UPF0034"/>
    <property type="match status" value="1"/>
</dbReference>
<comment type="function">
    <text evidence="1">Catalyzes the synthesis of 5,6-dihydrouridine (D), a modified base found in the D-loop of most tRNAs, via the reduction of the C5-C6 double bond in target uridines. Specifically modifies U16 in tRNAs.</text>
</comment>
<comment type="catalytic activity">
    <reaction evidence="1">
        <text>5,6-dihydrouridine(16) in tRNA + NADP(+) = uridine(16) in tRNA + NADPH + H(+)</text>
        <dbReference type="Rhea" id="RHEA:53376"/>
        <dbReference type="Rhea" id="RHEA-COMP:13543"/>
        <dbReference type="Rhea" id="RHEA-COMP:13544"/>
        <dbReference type="ChEBI" id="CHEBI:15378"/>
        <dbReference type="ChEBI" id="CHEBI:57783"/>
        <dbReference type="ChEBI" id="CHEBI:58349"/>
        <dbReference type="ChEBI" id="CHEBI:65315"/>
        <dbReference type="ChEBI" id="CHEBI:74443"/>
    </reaction>
</comment>
<comment type="catalytic activity">
    <reaction evidence="1">
        <text>5,6-dihydrouridine(16) in tRNA + NAD(+) = uridine(16) in tRNA + NADH + H(+)</text>
        <dbReference type="Rhea" id="RHEA:53380"/>
        <dbReference type="Rhea" id="RHEA-COMP:13543"/>
        <dbReference type="Rhea" id="RHEA-COMP:13544"/>
        <dbReference type="ChEBI" id="CHEBI:15378"/>
        <dbReference type="ChEBI" id="CHEBI:57540"/>
        <dbReference type="ChEBI" id="CHEBI:57945"/>
        <dbReference type="ChEBI" id="CHEBI:65315"/>
        <dbReference type="ChEBI" id="CHEBI:74443"/>
    </reaction>
</comment>
<comment type="cofactor">
    <cofactor evidence="1">
        <name>FMN</name>
        <dbReference type="ChEBI" id="CHEBI:58210"/>
    </cofactor>
</comment>
<comment type="similarity">
    <text evidence="1">Belongs to the Dus family. DusC subfamily.</text>
</comment>